<comment type="function">
    <text evidence="1">This is a non-secretory ribonuclease. It is a pyrimidine specific nuclease with a slight preference for U. Cytotoxin and helminthotoxin. Possesses a wide variety of biological activities (By similarity).</text>
</comment>
<comment type="catalytic activity">
    <reaction evidence="3">
        <text>an [RNA] containing cytidine + H2O = an [RNA]-3'-cytidine-3'-phosphate + a 5'-hydroxy-ribonucleotide-3'-[RNA].</text>
        <dbReference type="EC" id="4.6.1.18"/>
    </reaction>
</comment>
<comment type="catalytic activity">
    <reaction evidence="3">
        <text>an [RNA] containing uridine + H2O = an [RNA]-3'-uridine-3'-phosphate + a 5'-hydroxy-ribonucleotide-3'-[RNA].</text>
        <dbReference type="EC" id="4.6.1.18"/>
    </reaction>
</comment>
<comment type="subunit">
    <text evidence="1">Interacts with and forms a tight 1:1 complex with RNH1. Dimerization of two such complexes may occur (By similarity).</text>
</comment>
<comment type="subcellular location">
    <subcellularLocation>
        <location evidence="5">Lysosome</location>
    </subcellularLocation>
    <subcellularLocation>
        <location evidence="1">Cytoplasmic granule</location>
    </subcellularLocation>
    <text evidence="1">Matrix of eosinophil's large specific granule.</text>
</comment>
<comment type="similarity">
    <text evidence="5">Belongs to the pancreatic ribonuclease family.</text>
</comment>
<name>RNAS2_CHLAE</name>
<organism>
    <name type="scientific">Chlorocebus aethiops</name>
    <name type="common">Green monkey</name>
    <name type="synonym">Cercopithecus aethiops</name>
    <dbReference type="NCBI Taxonomy" id="9534"/>
    <lineage>
        <taxon>Eukaryota</taxon>
        <taxon>Metazoa</taxon>
        <taxon>Chordata</taxon>
        <taxon>Craniata</taxon>
        <taxon>Vertebrata</taxon>
        <taxon>Euteleostomi</taxon>
        <taxon>Mammalia</taxon>
        <taxon>Eutheria</taxon>
        <taxon>Euarchontoglires</taxon>
        <taxon>Primates</taxon>
        <taxon>Haplorrhini</taxon>
        <taxon>Catarrhini</taxon>
        <taxon>Cercopithecidae</taxon>
        <taxon>Cercopithecinae</taxon>
        <taxon>Chlorocebus</taxon>
    </lineage>
</organism>
<accession>Q8SPY6</accession>
<dbReference type="EC" id="4.6.1.18" evidence="3"/>
<dbReference type="EMBL" id="AF479630">
    <property type="protein sequence ID" value="AAM14437.1"/>
    <property type="molecule type" value="Genomic_DNA"/>
</dbReference>
<dbReference type="SMR" id="Q8SPY6"/>
<dbReference type="GlyCosmos" id="Q8SPY6">
    <property type="glycosylation" value="6 sites, No reported glycans"/>
</dbReference>
<dbReference type="GO" id="GO:0005615">
    <property type="term" value="C:extracellular space"/>
    <property type="evidence" value="ECO:0007669"/>
    <property type="project" value="TreeGrafter"/>
</dbReference>
<dbReference type="GO" id="GO:0005764">
    <property type="term" value="C:lysosome"/>
    <property type="evidence" value="ECO:0007669"/>
    <property type="project" value="UniProtKB-SubCell"/>
</dbReference>
<dbReference type="GO" id="GO:0016829">
    <property type="term" value="F:lyase activity"/>
    <property type="evidence" value="ECO:0007669"/>
    <property type="project" value="UniProtKB-KW"/>
</dbReference>
<dbReference type="GO" id="GO:0003676">
    <property type="term" value="F:nucleic acid binding"/>
    <property type="evidence" value="ECO:0007669"/>
    <property type="project" value="InterPro"/>
</dbReference>
<dbReference type="GO" id="GO:0004522">
    <property type="term" value="F:ribonuclease A activity"/>
    <property type="evidence" value="ECO:0007669"/>
    <property type="project" value="UniProtKB-EC"/>
</dbReference>
<dbReference type="GO" id="GO:0006935">
    <property type="term" value="P:chemotaxis"/>
    <property type="evidence" value="ECO:0007669"/>
    <property type="project" value="TreeGrafter"/>
</dbReference>
<dbReference type="GO" id="GO:0051607">
    <property type="term" value="P:defense response to virus"/>
    <property type="evidence" value="ECO:0007669"/>
    <property type="project" value="UniProtKB-ARBA"/>
</dbReference>
<dbReference type="GO" id="GO:0002227">
    <property type="term" value="P:innate immune response in mucosa"/>
    <property type="evidence" value="ECO:0007669"/>
    <property type="project" value="TreeGrafter"/>
</dbReference>
<dbReference type="CDD" id="cd06265">
    <property type="entry name" value="RNase_A_canonical"/>
    <property type="match status" value="1"/>
</dbReference>
<dbReference type="FunFam" id="3.10.130.10:FF:000001">
    <property type="entry name" value="Ribonuclease pancreatic"/>
    <property type="match status" value="1"/>
</dbReference>
<dbReference type="Gene3D" id="3.10.130.10">
    <property type="entry name" value="Ribonuclease A-like domain"/>
    <property type="match status" value="1"/>
</dbReference>
<dbReference type="InterPro" id="IPR001427">
    <property type="entry name" value="RNaseA"/>
</dbReference>
<dbReference type="InterPro" id="IPR036816">
    <property type="entry name" value="RNaseA-like_dom_sf"/>
</dbReference>
<dbReference type="InterPro" id="IPR023411">
    <property type="entry name" value="RNaseA_AS"/>
</dbReference>
<dbReference type="InterPro" id="IPR023412">
    <property type="entry name" value="RNaseA_domain"/>
</dbReference>
<dbReference type="PANTHER" id="PTHR11437:SF62">
    <property type="entry name" value="NON-SECRETORY RIBONUCLEASE"/>
    <property type="match status" value="1"/>
</dbReference>
<dbReference type="PANTHER" id="PTHR11437">
    <property type="entry name" value="RIBONUCLEASE"/>
    <property type="match status" value="1"/>
</dbReference>
<dbReference type="Pfam" id="PF00074">
    <property type="entry name" value="RnaseA"/>
    <property type="match status" value="1"/>
</dbReference>
<dbReference type="PRINTS" id="PR00794">
    <property type="entry name" value="RIBONUCLEASE"/>
</dbReference>
<dbReference type="SMART" id="SM00092">
    <property type="entry name" value="RNAse_Pc"/>
    <property type="match status" value="1"/>
</dbReference>
<dbReference type="SUPFAM" id="SSF54076">
    <property type="entry name" value="RNase A-like"/>
    <property type="match status" value="1"/>
</dbReference>
<dbReference type="PROSITE" id="PS00127">
    <property type="entry name" value="RNASE_PANCREATIC"/>
    <property type="match status" value="1"/>
</dbReference>
<keyword id="KW-1015">Disulfide bond</keyword>
<keyword id="KW-0255">Endonuclease</keyword>
<keyword id="KW-0325">Glycoprotein</keyword>
<keyword id="KW-0378">Hydrolase</keyword>
<keyword id="KW-0456">Lyase</keyword>
<keyword id="KW-0458">Lysosome</keyword>
<keyword id="KW-0944">Nitration</keyword>
<keyword id="KW-0540">Nuclease</keyword>
<keyword id="KW-0732">Signal</keyword>
<feature type="signal peptide" evidence="1">
    <location>
        <begin position="1"/>
        <end position="27"/>
    </location>
</feature>
<feature type="chain" id="PRO_0000030872" description="Non-secretory ribonuclease">
    <location>
        <begin position="28"/>
        <end position="160"/>
    </location>
</feature>
<feature type="active site" description="Proton acceptor" evidence="1">
    <location>
        <position position="42"/>
    </location>
</feature>
<feature type="active site" description="Proton donor" evidence="1">
    <location>
        <position position="155"/>
    </location>
</feature>
<feature type="binding site" evidence="1">
    <location>
        <begin position="65"/>
        <end position="69"/>
    </location>
    <ligand>
        <name>substrate</name>
    </ligand>
</feature>
<feature type="modified residue" description="3'-nitrotyrosine" evidence="2">
    <location>
        <position position="60"/>
    </location>
</feature>
<feature type="glycosylation site" description="C-linked (Man) tryptophan" evidence="2">
    <location>
        <position position="34"/>
    </location>
</feature>
<feature type="glycosylation site" description="N-linked (GlcNAc...) asparagine" evidence="4">
    <location>
        <position position="44"/>
    </location>
</feature>
<feature type="glycosylation site" description="N-linked (GlcNAc...) asparagine" evidence="4">
    <location>
        <position position="92"/>
    </location>
</feature>
<feature type="glycosylation site" description="N-linked (GlcNAc...) asparagine" evidence="4">
    <location>
        <position position="111"/>
    </location>
</feature>
<feature type="glycosylation site" description="N-linked (GlcNAc...) asparagine" evidence="4">
    <location>
        <position position="118"/>
    </location>
</feature>
<feature type="glycosylation site" description="N-linked (GlcNAc...) asparagine" evidence="4">
    <location>
        <position position="138"/>
    </location>
</feature>
<feature type="disulfide bond" evidence="1">
    <location>
        <begin position="50"/>
        <end position="110"/>
    </location>
</feature>
<feature type="disulfide bond" evidence="1">
    <location>
        <begin position="64"/>
        <end position="122"/>
    </location>
</feature>
<feature type="disulfide bond" evidence="1">
    <location>
        <begin position="82"/>
        <end position="137"/>
    </location>
</feature>
<feature type="disulfide bond" evidence="1">
    <location>
        <begin position="89"/>
        <end position="98"/>
    </location>
</feature>
<sequence>MVPKLFTSPICLLLLLGLMGVEGSLHAKPGQFTWAQWFEIQHINMTSGQCTNAMLVINNYQRRCKNQNTFLLTTFADVVHVCGNPSMPCPSNTSLNNCHHSGVQVPLIHCNLTTPSQNISNCKYTQTTANKFYIVACNNSDPVRDPPQYPVVPVHLDRVI</sequence>
<gene>
    <name type="primary">RNASE2</name>
    <name type="synonym">EDN</name>
    <name type="synonym">RNS2</name>
</gene>
<reference key="1">
    <citation type="journal article" date="2002" name="Proc. Natl. Acad. Sci. U.S.A.">
        <title>Complementary advantageous substitutions in the evolution of an antiviral RNase of higher primates.</title>
        <authorList>
            <person name="Zhang J."/>
            <person name="Rosenberg H.F."/>
        </authorList>
    </citation>
    <scope>NUCLEOTIDE SEQUENCE [GENOMIC DNA]</scope>
</reference>
<proteinExistence type="inferred from homology"/>
<protein>
    <recommendedName>
        <fullName>Non-secretory ribonuclease</fullName>
        <ecNumber evidence="3">4.6.1.18</ecNumber>
    </recommendedName>
    <alternativeName>
        <fullName>Eosinophil-derived neurotoxin</fullName>
    </alternativeName>
    <alternativeName>
        <fullName>RNase UpI-2</fullName>
    </alternativeName>
    <alternativeName>
        <fullName>Ribonuclease 2</fullName>
        <shortName>RNase 2</shortName>
    </alternativeName>
    <alternativeName>
        <fullName>Ribonuclease US</fullName>
    </alternativeName>
</protein>
<evidence type="ECO:0000250" key="1"/>
<evidence type="ECO:0000250" key="2">
    <source>
        <dbReference type="UniProtKB" id="P10153"/>
    </source>
</evidence>
<evidence type="ECO:0000250" key="3">
    <source>
        <dbReference type="UniProtKB" id="P47784"/>
    </source>
</evidence>
<evidence type="ECO:0000255" key="4"/>
<evidence type="ECO:0000305" key="5"/>